<comment type="similarity">
    <text evidence="1">Belongs to the UPF0303 family.</text>
</comment>
<dbReference type="EMBL" id="AM236080">
    <property type="protein sequence ID" value="CAK08852.1"/>
    <property type="molecule type" value="Genomic_DNA"/>
</dbReference>
<dbReference type="RefSeq" id="WP_011652853.1">
    <property type="nucleotide sequence ID" value="NC_008380.1"/>
</dbReference>
<dbReference type="SMR" id="Q1MDX5"/>
<dbReference type="EnsemblBacteria" id="CAK08852">
    <property type="protein sequence ID" value="CAK08852"/>
    <property type="gene ID" value="RL3365"/>
</dbReference>
<dbReference type="KEGG" id="rle:RL3365"/>
<dbReference type="eggNOG" id="COG4702">
    <property type="taxonomic scope" value="Bacteria"/>
</dbReference>
<dbReference type="HOGENOM" id="CLU_101036_2_2_5"/>
<dbReference type="Proteomes" id="UP000006575">
    <property type="component" value="Chromosome"/>
</dbReference>
<dbReference type="Gene3D" id="3.30.450.150">
    <property type="entry name" value="Haem-degrading domain"/>
    <property type="match status" value="1"/>
</dbReference>
<dbReference type="HAMAP" id="MF_00761">
    <property type="entry name" value="UPF0303"/>
    <property type="match status" value="1"/>
</dbReference>
<dbReference type="InterPro" id="IPR005624">
    <property type="entry name" value="PduO/GlcC-like"/>
</dbReference>
<dbReference type="InterPro" id="IPR038084">
    <property type="entry name" value="PduO/GlcC-like_sf"/>
</dbReference>
<dbReference type="InterPro" id="IPR010371">
    <property type="entry name" value="YBR137W-like"/>
</dbReference>
<dbReference type="NCBIfam" id="NF002696">
    <property type="entry name" value="PRK02487.1-5"/>
    <property type="match status" value="1"/>
</dbReference>
<dbReference type="PANTHER" id="PTHR28255">
    <property type="match status" value="1"/>
</dbReference>
<dbReference type="PANTHER" id="PTHR28255:SF1">
    <property type="entry name" value="UPF0303 PROTEIN YBR137W"/>
    <property type="match status" value="1"/>
</dbReference>
<dbReference type="Pfam" id="PF03928">
    <property type="entry name" value="HbpS-like"/>
    <property type="match status" value="1"/>
</dbReference>
<dbReference type="PIRSF" id="PIRSF008757">
    <property type="entry name" value="UCP008757"/>
    <property type="match status" value="1"/>
</dbReference>
<dbReference type="SUPFAM" id="SSF143744">
    <property type="entry name" value="GlcG-like"/>
    <property type="match status" value="1"/>
</dbReference>
<feature type="chain" id="PRO_1000046752" description="UPF0303 protein RL3365">
    <location>
        <begin position="1"/>
        <end position="162"/>
    </location>
</feature>
<accession>Q1MDX5</accession>
<protein>
    <recommendedName>
        <fullName evidence="1">UPF0303 protein RL3365</fullName>
    </recommendedName>
</protein>
<name>Y3365_RHIJ3</name>
<evidence type="ECO:0000255" key="1">
    <source>
        <dbReference type="HAMAP-Rule" id="MF_00761"/>
    </source>
</evidence>
<organism>
    <name type="scientific">Rhizobium johnstonii (strain DSM 114642 / LMG 32736 / 3841)</name>
    <name type="common">Rhizobium leguminosarum bv. viciae</name>
    <dbReference type="NCBI Taxonomy" id="216596"/>
    <lineage>
        <taxon>Bacteria</taxon>
        <taxon>Pseudomonadati</taxon>
        <taxon>Pseudomonadota</taxon>
        <taxon>Alphaproteobacteria</taxon>
        <taxon>Hyphomicrobiales</taxon>
        <taxon>Rhizobiaceae</taxon>
        <taxon>Rhizobium/Agrobacterium group</taxon>
        <taxon>Rhizobium</taxon>
        <taxon>Rhizobium johnstonii</taxon>
    </lineage>
</organism>
<gene>
    <name type="ordered locus">RL3365</name>
</gene>
<proteinExistence type="inferred from homology"/>
<sequence length="162" mass="17618">MTIDDDLSRIAEQEKVLSFDAFDLTTAWQLGKLLQELATERGLGIAIDVTLHSMPVFYAALPGVTPDNVNWVRRKRNMVLRYFRSSYASGLKLQKDGKTVEDNGLSGADYAPHGGSFPINVKGSGCIGAVTVSGLPQRDDHNLAVEALALMLAKDLDTLRLA</sequence>
<reference key="1">
    <citation type="journal article" date="2006" name="Genome Biol.">
        <title>The genome of Rhizobium leguminosarum has recognizable core and accessory components.</title>
        <authorList>
            <person name="Young J.P.W."/>
            <person name="Crossman L.C."/>
            <person name="Johnston A.W.B."/>
            <person name="Thomson N.R."/>
            <person name="Ghazoui Z.F."/>
            <person name="Hull K.H."/>
            <person name="Wexler M."/>
            <person name="Curson A.R.J."/>
            <person name="Todd J.D."/>
            <person name="Poole P.S."/>
            <person name="Mauchline T.H."/>
            <person name="East A.K."/>
            <person name="Quail M.A."/>
            <person name="Churcher C."/>
            <person name="Arrowsmith C."/>
            <person name="Cherevach I."/>
            <person name="Chillingworth T."/>
            <person name="Clarke K."/>
            <person name="Cronin A."/>
            <person name="Davis P."/>
            <person name="Fraser A."/>
            <person name="Hance Z."/>
            <person name="Hauser H."/>
            <person name="Jagels K."/>
            <person name="Moule S."/>
            <person name="Mungall K."/>
            <person name="Norbertczak H."/>
            <person name="Rabbinowitsch E."/>
            <person name="Sanders M."/>
            <person name="Simmonds M."/>
            <person name="Whitehead S."/>
            <person name="Parkhill J."/>
        </authorList>
    </citation>
    <scope>NUCLEOTIDE SEQUENCE [LARGE SCALE GENOMIC DNA]</scope>
    <source>
        <strain>DSM 114642 / LMG 32736 / 3841</strain>
    </source>
</reference>